<evidence type="ECO:0000250" key="1">
    <source>
        <dbReference type="UniProtKB" id="P46654"/>
    </source>
</evidence>
<evidence type="ECO:0000255" key="2">
    <source>
        <dbReference type="HAMAP-Rule" id="MF_03015"/>
    </source>
</evidence>
<evidence type="ECO:0000256" key="3">
    <source>
        <dbReference type="SAM" id="MobiDB-lite"/>
    </source>
</evidence>
<evidence type="ECO:0000305" key="4"/>
<proteinExistence type="inferred from homology"/>
<reference key="1">
    <citation type="journal article" date="2007" name="Proc. Natl. Acad. Sci. U.S.A.">
        <title>Genome sequencing and comparative analysis of Saccharomyces cerevisiae strain YJM789.</title>
        <authorList>
            <person name="Wei W."/>
            <person name="McCusker J.H."/>
            <person name="Hyman R.W."/>
            <person name="Jones T."/>
            <person name="Ning Y."/>
            <person name="Cao Z."/>
            <person name="Gu Z."/>
            <person name="Bruno D."/>
            <person name="Miranda M."/>
            <person name="Nguyen M."/>
            <person name="Wilhelmy J."/>
            <person name="Komp C."/>
            <person name="Tamse R."/>
            <person name="Wang X."/>
            <person name="Jia P."/>
            <person name="Luedi P."/>
            <person name="Oefner P.J."/>
            <person name="David L."/>
            <person name="Dietrich F.S."/>
            <person name="Li Y."/>
            <person name="Davis R.W."/>
            <person name="Steinmetz L.M."/>
        </authorList>
    </citation>
    <scope>NUCLEOTIDE SEQUENCE [LARGE SCALE GENOMIC DNA]</scope>
    <source>
        <strain>YJM789</strain>
    </source>
</reference>
<sequence>MSLPATFDLTPEDAQLLLAANTHLGARNVQVHQEPYVFNARPDGVHVINVGKTWEKLVLAARIIAAIPNPEDVVAISSRTYGQRAVLKFAAHTGATPIAGRFTPGSFTNYITRSFKEPRLVIVTDPRLDAQAIKEASYVNIPVIALTDLDSPSEFVDVAIPCNNRGKHSIGLIWYLLAREVLRLRGALVDRTQPWSIMPDLYFYRNPEEVEQVAEEAAAAEEGEEEEVKEEVTEGQAEATEWAEENADNVEW</sequence>
<feature type="initiator methionine" description="Removed" evidence="2">
    <location>
        <position position="1"/>
    </location>
</feature>
<feature type="chain" id="PRO_0000371648" description="Small ribosomal subunit protein uS2B">
    <location>
        <begin position="2"/>
        <end position="252"/>
    </location>
</feature>
<feature type="region of interest" description="Disordered" evidence="3">
    <location>
        <begin position="213"/>
        <end position="252"/>
    </location>
</feature>
<feature type="compositionally biased region" description="Acidic residues" evidence="3">
    <location>
        <begin position="213"/>
        <end position="229"/>
    </location>
</feature>
<feature type="compositionally biased region" description="Acidic residues" evidence="3">
    <location>
        <begin position="241"/>
        <end position="252"/>
    </location>
</feature>
<feature type="modified residue" description="N-acetylserine" evidence="1 2">
    <location>
        <position position="2"/>
    </location>
</feature>
<accession>A7A0V3</accession>
<organism>
    <name type="scientific">Saccharomyces cerevisiae (strain YJM789)</name>
    <name type="common">Baker's yeast</name>
    <dbReference type="NCBI Taxonomy" id="307796"/>
    <lineage>
        <taxon>Eukaryota</taxon>
        <taxon>Fungi</taxon>
        <taxon>Dikarya</taxon>
        <taxon>Ascomycota</taxon>
        <taxon>Saccharomycotina</taxon>
        <taxon>Saccharomycetes</taxon>
        <taxon>Saccharomycetales</taxon>
        <taxon>Saccharomycetaceae</taxon>
        <taxon>Saccharomyces</taxon>
    </lineage>
</organism>
<name>RSSA2_YEAS7</name>
<dbReference type="EMBL" id="AAFW02000167">
    <property type="protein sequence ID" value="EDN59594.1"/>
    <property type="molecule type" value="Genomic_DNA"/>
</dbReference>
<dbReference type="SMR" id="A7A0V3"/>
<dbReference type="IntAct" id="A7A0V3">
    <property type="interactions" value="2"/>
</dbReference>
<dbReference type="MINT" id="A7A0V3"/>
<dbReference type="HOGENOM" id="CLU_058171_2_0_1"/>
<dbReference type="Proteomes" id="UP000007060">
    <property type="component" value="Unassembled WGS sequence"/>
</dbReference>
<dbReference type="GO" id="GO:0022627">
    <property type="term" value="C:cytosolic small ribosomal subunit"/>
    <property type="evidence" value="ECO:0007669"/>
    <property type="project" value="UniProtKB-UniRule"/>
</dbReference>
<dbReference type="GO" id="GO:0003735">
    <property type="term" value="F:structural constituent of ribosome"/>
    <property type="evidence" value="ECO:0007669"/>
    <property type="project" value="UniProtKB-UniRule"/>
</dbReference>
<dbReference type="GO" id="GO:0000028">
    <property type="term" value="P:ribosomal small subunit assembly"/>
    <property type="evidence" value="ECO:0007669"/>
    <property type="project" value="UniProtKB-UniRule"/>
</dbReference>
<dbReference type="GO" id="GO:0006412">
    <property type="term" value="P:translation"/>
    <property type="evidence" value="ECO:0007669"/>
    <property type="project" value="UniProtKB-UniRule"/>
</dbReference>
<dbReference type="CDD" id="cd01425">
    <property type="entry name" value="RPS2"/>
    <property type="match status" value="1"/>
</dbReference>
<dbReference type="FunFam" id="3.40.50.10490:FF:000010">
    <property type="entry name" value="40S ribosomal protein S0"/>
    <property type="match status" value="1"/>
</dbReference>
<dbReference type="Gene3D" id="3.40.50.10490">
    <property type="entry name" value="Glucose-6-phosphate isomerase like protein, domain 1"/>
    <property type="match status" value="1"/>
</dbReference>
<dbReference type="HAMAP" id="MF_03015">
    <property type="entry name" value="Ribosomal_S2_euk"/>
    <property type="match status" value="1"/>
</dbReference>
<dbReference type="InterPro" id="IPR001865">
    <property type="entry name" value="Ribosomal_uS2"/>
</dbReference>
<dbReference type="InterPro" id="IPR018130">
    <property type="entry name" value="Ribosomal_uS2_CS"/>
</dbReference>
<dbReference type="InterPro" id="IPR027498">
    <property type="entry name" value="Ribosomal_uS2_euk"/>
</dbReference>
<dbReference type="InterPro" id="IPR005707">
    <property type="entry name" value="Ribosomal_uS2_euk/arc"/>
</dbReference>
<dbReference type="InterPro" id="IPR023591">
    <property type="entry name" value="Ribosomal_uS2_flav_dom_sf"/>
</dbReference>
<dbReference type="NCBIfam" id="TIGR01012">
    <property type="entry name" value="uS2_euk_arch"/>
    <property type="match status" value="1"/>
</dbReference>
<dbReference type="PANTHER" id="PTHR11489">
    <property type="entry name" value="40S RIBOSOMAL PROTEIN SA"/>
    <property type="match status" value="1"/>
</dbReference>
<dbReference type="Pfam" id="PF00318">
    <property type="entry name" value="Ribosomal_S2"/>
    <property type="match status" value="2"/>
</dbReference>
<dbReference type="PRINTS" id="PR00395">
    <property type="entry name" value="RIBOSOMALS2"/>
</dbReference>
<dbReference type="SUPFAM" id="SSF52313">
    <property type="entry name" value="Ribosomal protein S2"/>
    <property type="match status" value="1"/>
</dbReference>
<dbReference type="PROSITE" id="PS00962">
    <property type="entry name" value="RIBOSOMAL_S2_1"/>
    <property type="match status" value="1"/>
</dbReference>
<dbReference type="PROSITE" id="PS00963">
    <property type="entry name" value="RIBOSOMAL_S2_2"/>
    <property type="match status" value="1"/>
</dbReference>
<keyword id="KW-0007">Acetylation</keyword>
<keyword id="KW-0963">Cytoplasm</keyword>
<keyword id="KW-0687">Ribonucleoprotein</keyword>
<keyword id="KW-0689">Ribosomal protein</keyword>
<comment type="function">
    <text evidence="2">Required for the assembly and/or stability of the 40S ribosomal subunit. Required for the processing of the 20S rRNA-precursor to mature 18S rRNA in a late step of the maturation of 40S ribosomal subunits.</text>
</comment>
<comment type="subunit">
    <text evidence="2">Component of the small ribosomal subunit. Mature ribosomes consist of a small (40S) and a large (60S) subunit. The 40S subunit contains about 33 different proteins and 1 molecule of RNA (18S). The 60S subunit contains about 49 different proteins and 3 molecules of RNA (25S, 5.8S and 5S). Interacts with RPS21.</text>
</comment>
<comment type="subcellular location">
    <subcellularLocation>
        <location evidence="2">Cytoplasm</location>
    </subcellularLocation>
</comment>
<comment type="similarity">
    <text evidence="2">Belongs to the universal ribosomal protein uS2 family.</text>
</comment>
<gene>
    <name evidence="2" type="primary">RPS0B</name>
    <name type="synonym">NAB1B</name>
    <name type="synonym">NAB4</name>
    <name type="synonym">YST2</name>
    <name type="ORF">SCY_3627</name>
</gene>
<protein>
    <recommendedName>
        <fullName evidence="2">Small ribosomal subunit protein uS2B</fullName>
    </recommendedName>
    <alternativeName>
        <fullName evidence="4">40S ribosomal protein S0-B</fullName>
    </alternativeName>
    <alternativeName>
        <fullName>Nucleic acid-binding protein NAB1B</fullName>
    </alternativeName>
</protein>